<proteinExistence type="inferred from homology"/>
<evidence type="ECO:0000255" key="1">
    <source>
        <dbReference type="HAMAP-Rule" id="MF_00148"/>
    </source>
</evidence>
<name>UNG_ACIBT</name>
<feature type="chain" id="PRO_1000096558" description="Uracil-DNA glycosylase">
    <location>
        <begin position="1"/>
        <end position="237"/>
    </location>
</feature>
<feature type="active site" description="Proton acceptor" evidence="1">
    <location>
        <position position="77"/>
    </location>
</feature>
<sequence>MQLTEQQQDKLSKVQLEESWKRSLTPFLLSPYMDSLRDFLFQQKQAQKTIYPPSKQIFNALNITPLDHVKVVILGQDPYHGPNQANGLSFSVQRGVALPPSLRNIFHELHTDLGVPVSRHGDLTKWAEQGVLLLNSVLTVEAGQPTSHQKQGWEEFTDAVIDVLNEQREHIVFILWGAYAQRKGQRINREKHLVLTAAHPSPLAANRGGFFGCKVFSKTNQYLKQHGIEPIDWQLDA</sequence>
<gene>
    <name evidence="1" type="primary">ung</name>
    <name type="ordered locus">A1S_1567</name>
</gene>
<keyword id="KW-0963">Cytoplasm</keyword>
<keyword id="KW-0227">DNA damage</keyword>
<keyword id="KW-0234">DNA repair</keyword>
<keyword id="KW-0378">Hydrolase</keyword>
<comment type="function">
    <text evidence="1">Excises uracil residues from the DNA which can arise as a result of misincorporation of dUMP residues by DNA polymerase or due to deamination of cytosine.</text>
</comment>
<comment type="catalytic activity">
    <reaction evidence="1">
        <text>Hydrolyzes single-stranded DNA or mismatched double-stranded DNA and polynucleotides, releasing free uracil.</text>
        <dbReference type="EC" id="3.2.2.27"/>
    </reaction>
</comment>
<comment type="subcellular location">
    <subcellularLocation>
        <location evidence="1">Cytoplasm</location>
    </subcellularLocation>
</comment>
<comment type="similarity">
    <text evidence="1">Belongs to the uracil-DNA glycosylase (UDG) superfamily. UNG family.</text>
</comment>
<accession>A3M500</accession>
<organism>
    <name type="scientific">Acinetobacter baumannii (strain ATCC 17978 / DSM 105126 / CIP 53.77 / LMG 1025 / NCDC KC755 / 5377)</name>
    <dbReference type="NCBI Taxonomy" id="400667"/>
    <lineage>
        <taxon>Bacteria</taxon>
        <taxon>Pseudomonadati</taxon>
        <taxon>Pseudomonadota</taxon>
        <taxon>Gammaproteobacteria</taxon>
        <taxon>Moraxellales</taxon>
        <taxon>Moraxellaceae</taxon>
        <taxon>Acinetobacter</taxon>
        <taxon>Acinetobacter calcoaceticus/baumannii complex</taxon>
    </lineage>
</organism>
<reference key="1">
    <citation type="journal article" date="2007" name="Genes Dev.">
        <title>New insights into Acinetobacter baumannii pathogenesis revealed by high-density pyrosequencing and transposon mutagenesis.</title>
        <authorList>
            <person name="Smith M.G."/>
            <person name="Gianoulis T.A."/>
            <person name="Pukatzki S."/>
            <person name="Mekalanos J.J."/>
            <person name="Ornston L.N."/>
            <person name="Gerstein M."/>
            <person name="Snyder M."/>
        </authorList>
    </citation>
    <scope>NUCLEOTIDE SEQUENCE [LARGE SCALE GENOMIC DNA]</scope>
    <source>
        <strain>ATCC 17978 / DSM 105126 / CIP 53.77 / LMG 1025 / NCDC KC755 / 5377</strain>
    </source>
</reference>
<protein>
    <recommendedName>
        <fullName evidence="1">Uracil-DNA glycosylase</fullName>
        <shortName evidence="1">UDG</shortName>
        <ecNumber evidence="1">3.2.2.27</ecNumber>
    </recommendedName>
</protein>
<dbReference type="EC" id="3.2.2.27" evidence="1"/>
<dbReference type="EMBL" id="CP000521">
    <property type="protein sequence ID" value="ABO11994.2"/>
    <property type="molecule type" value="Genomic_DNA"/>
</dbReference>
<dbReference type="RefSeq" id="WP_001177528.1">
    <property type="nucleotide sequence ID" value="NZ_CP053098.1"/>
</dbReference>
<dbReference type="SMR" id="A3M500"/>
<dbReference type="KEGG" id="acb:A1S_1567"/>
<dbReference type="HOGENOM" id="CLU_032162_3_0_6"/>
<dbReference type="GO" id="GO:0005737">
    <property type="term" value="C:cytoplasm"/>
    <property type="evidence" value="ECO:0007669"/>
    <property type="project" value="UniProtKB-SubCell"/>
</dbReference>
<dbReference type="GO" id="GO:0004844">
    <property type="term" value="F:uracil DNA N-glycosylase activity"/>
    <property type="evidence" value="ECO:0007669"/>
    <property type="project" value="UniProtKB-UniRule"/>
</dbReference>
<dbReference type="GO" id="GO:0097510">
    <property type="term" value="P:base-excision repair, AP site formation via deaminated base removal"/>
    <property type="evidence" value="ECO:0007669"/>
    <property type="project" value="TreeGrafter"/>
</dbReference>
<dbReference type="CDD" id="cd10027">
    <property type="entry name" value="UDG-F1-like"/>
    <property type="match status" value="1"/>
</dbReference>
<dbReference type="FunFam" id="3.40.470.10:FF:000001">
    <property type="entry name" value="Uracil-DNA glycosylase"/>
    <property type="match status" value="1"/>
</dbReference>
<dbReference type="Gene3D" id="3.40.470.10">
    <property type="entry name" value="Uracil-DNA glycosylase-like domain"/>
    <property type="match status" value="1"/>
</dbReference>
<dbReference type="HAMAP" id="MF_00148">
    <property type="entry name" value="UDG"/>
    <property type="match status" value="1"/>
</dbReference>
<dbReference type="InterPro" id="IPR002043">
    <property type="entry name" value="UDG_fam1"/>
</dbReference>
<dbReference type="InterPro" id="IPR018085">
    <property type="entry name" value="Ura-DNA_Glyclase_AS"/>
</dbReference>
<dbReference type="InterPro" id="IPR005122">
    <property type="entry name" value="Uracil-DNA_glycosylase-like"/>
</dbReference>
<dbReference type="InterPro" id="IPR036895">
    <property type="entry name" value="Uracil-DNA_glycosylase-like_sf"/>
</dbReference>
<dbReference type="NCBIfam" id="NF003588">
    <property type="entry name" value="PRK05254.1-1"/>
    <property type="match status" value="1"/>
</dbReference>
<dbReference type="NCBIfam" id="NF003589">
    <property type="entry name" value="PRK05254.1-2"/>
    <property type="match status" value="1"/>
</dbReference>
<dbReference type="NCBIfam" id="NF003591">
    <property type="entry name" value="PRK05254.1-4"/>
    <property type="match status" value="1"/>
</dbReference>
<dbReference type="NCBIfam" id="NF003592">
    <property type="entry name" value="PRK05254.1-5"/>
    <property type="match status" value="1"/>
</dbReference>
<dbReference type="NCBIfam" id="TIGR00628">
    <property type="entry name" value="ung"/>
    <property type="match status" value="1"/>
</dbReference>
<dbReference type="PANTHER" id="PTHR11264">
    <property type="entry name" value="URACIL-DNA GLYCOSYLASE"/>
    <property type="match status" value="1"/>
</dbReference>
<dbReference type="PANTHER" id="PTHR11264:SF0">
    <property type="entry name" value="URACIL-DNA GLYCOSYLASE"/>
    <property type="match status" value="1"/>
</dbReference>
<dbReference type="Pfam" id="PF03167">
    <property type="entry name" value="UDG"/>
    <property type="match status" value="1"/>
</dbReference>
<dbReference type="SMART" id="SM00986">
    <property type="entry name" value="UDG"/>
    <property type="match status" value="1"/>
</dbReference>
<dbReference type="SMART" id="SM00987">
    <property type="entry name" value="UreE_C"/>
    <property type="match status" value="1"/>
</dbReference>
<dbReference type="SUPFAM" id="SSF52141">
    <property type="entry name" value="Uracil-DNA glycosylase-like"/>
    <property type="match status" value="1"/>
</dbReference>
<dbReference type="PROSITE" id="PS00130">
    <property type="entry name" value="U_DNA_GLYCOSYLASE"/>
    <property type="match status" value="1"/>
</dbReference>